<feature type="chain" id="PRO_0000126441" description="Small ribosomal subunit protein uS8">
    <location>
        <begin position="1"/>
        <end position="132"/>
    </location>
</feature>
<keyword id="KW-1185">Reference proteome</keyword>
<keyword id="KW-0687">Ribonucleoprotein</keyword>
<keyword id="KW-0689">Ribosomal protein</keyword>
<keyword id="KW-0694">RNA-binding</keyword>
<keyword id="KW-0699">rRNA-binding</keyword>
<protein>
    <recommendedName>
        <fullName evidence="1">Small ribosomal subunit protein uS8</fullName>
    </recommendedName>
    <alternativeName>
        <fullName evidence="2">30S ribosomal protein S8</fullName>
    </alternativeName>
</protein>
<reference key="1">
    <citation type="journal article" date="2001" name="Nature">
        <title>Massive gene decay in the leprosy bacillus.</title>
        <authorList>
            <person name="Cole S.T."/>
            <person name="Eiglmeier K."/>
            <person name="Parkhill J."/>
            <person name="James K.D."/>
            <person name="Thomson N.R."/>
            <person name="Wheeler P.R."/>
            <person name="Honore N."/>
            <person name="Garnier T."/>
            <person name="Churcher C.M."/>
            <person name="Harris D.E."/>
            <person name="Mungall K.L."/>
            <person name="Basham D."/>
            <person name="Brown D."/>
            <person name="Chillingworth T."/>
            <person name="Connor R."/>
            <person name="Davies R.M."/>
            <person name="Devlin K."/>
            <person name="Duthoy S."/>
            <person name="Feltwell T."/>
            <person name="Fraser A."/>
            <person name="Hamlin N."/>
            <person name="Holroyd S."/>
            <person name="Hornsby T."/>
            <person name="Jagels K."/>
            <person name="Lacroix C."/>
            <person name="Maclean J."/>
            <person name="Moule S."/>
            <person name="Murphy L.D."/>
            <person name="Oliver K."/>
            <person name="Quail M.A."/>
            <person name="Rajandream M.A."/>
            <person name="Rutherford K.M."/>
            <person name="Rutter S."/>
            <person name="Seeger K."/>
            <person name="Simon S."/>
            <person name="Simmonds M."/>
            <person name="Skelton J."/>
            <person name="Squares R."/>
            <person name="Squares S."/>
            <person name="Stevens K."/>
            <person name="Taylor K."/>
            <person name="Whitehead S."/>
            <person name="Woodward J.R."/>
            <person name="Barrell B.G."/>
        </authorList>
    </citation>
    <scope>NUCLEOTIDE SEQUENCE [LARGE SCALE GENOMIC DNA]</scope>
    <source>
        <strain>TN</strain>
    </source>
</reference>
<sequence length="132" mass="14521">MTMTDPIADFLTRLRNANSAYHDEVTVPHSNIKANIAQILKNEGYIRDFRTEDARVGKSLIIQLKYGPSRERSIAGLRRVSKPGLRVYAKSINLPRVLGGLGVVIISTSSGLLTDRQAARQGVGGEVLAYVW</sequence>
<name>RS8_MYCLE</name>
<accession>O32997</accession>
<dbReference type="EMBL" id="Z98756">
    <property type="protein sequence ID" value="CAB11450.1"/>
    <property type="molecule type" value="Genomic_DNA"/>
</dbReference>
<dbReference type="EMBL" id="AL583923">
    <property type="protein sequence ID" value="CAC30799.1"/>
    <property type="molecule type" value="Genomic_DNA"/>
</dbReference>
<dbReference type="PIR" id="T45380">
    <property type="entry name" value="T45380"/>
</dbReference>
<dbReference type="RefSeq" id="NP_302251.1">
    <property type="nucleotide sequence ID" value="NC_002677.1"/>
</dbReference>
<dbReference type="RefSeq" id="WP_010908572.1">
    <property type="nucleotide sequence ID" value="NC_002677.1"/>
</dbReference>
<dbReference type="SMR" id="O32997"/>
<dbReference type="STRING" id="272631.gene:17575693"/>
<dbReference type="KEGG" id="mle:ML1845"/>
<dbReference type="PATRIC" id="fig|272631.5.peg.3495"/>
<dbReference type="Leproma" id="ML1845"/>
<dbReference type="eggNOG" id="COG0096">
    <property type="taxonomic scope" value="Bacteria"/>
</dbReference>
<dbReference type="HOGENOM" id="CLU_098428_0_1_11"/>
<dbReference type="OrthoDB" id="9802617at2"/>
<dbReference type="Proteomes" id="UP000000806">
    <property type="component" value="Chromosome"/>
</dbReference>
<dbReference type="GO" id="GO:1990904">
    <property type="term" value="C:ribonucleoprotein complex"/>
    <property type="evidence" value="ECO:0007669"/>
    <property type="project" value="UniProtKB-KW"/>
</dbReference>
<dbReference type="GO" id="GO:0005840">
    <property type="term" value="C:ribosome"/>
    <property type="evidence" value="ECO:0007669"/>
    <property type="project" value="UniProtKB-KW"/>
</dbReference>
<dbReference type="GO" id="GO:0019843">
    <property type="term" value="F:rRNA binding"/>
    <property type="evidence" value="ECO:0007669"/>
    <property type="project" value="UniProtKB-UniRule"/>
</dbReference>
<dbReference type="GO" id="GO:0003735">
    <property type="term" value="F:structural constituent of ribosome"/>
    <property type="evidence" value="ECO:0007669"/>
    <property type="project" value="InterPro"/>
</dbReference>
<dbReference type="GO" id="GO:0006412">
    <property type="term" value="P:translation"/>
    <property type="evidence" value="ECO:0007669"/>
    <property type="project" value="UniProtKB-UniRule"/>
</dbReference>
<dbReference type="FunFam" id="3.30.1370.30:FF:000002">
    <property type="entry name" value="30S ribosomal protein S8"/>
    <property type="match status" value="1"/>
</dbReference>
<dbReference type="FunFam" id="3.30.1490.10:FF:000001">
    <property type="entry name" value="30S ribosomal protein S8"/>
    <property type="match status" value="1"/>
</dbReference>
<dbReference type="Gene3D" id="3.30.1370.30">
    <property type="match status" value="1"/>
</dbReference>
<dbReference type="Gene3D" id="3.30.1490.10">
    <property type="match status" value="1"/>
</dbReference>
<dbReference type="HAMAP" id="MF_01302_B">
    <property type="entry name" value="Ribosomal_uS8_B"/>
    <property type="match status" value="1"/>
</dbReference>
<dbReference type="InterPro" id="IPR000630">
    <property type="entry name" value="Ribosomal_uS8"/>
</dbReference>
<dbReference type="InterPro" id="IPR047863">
    <property type="entry name" value="Ribosomal_uS8_CS"/>
</dbReference>
<dbReference type="InterPro" id="IPR035987">
    <property type="entry name" value="Ribosomal_uS8_sf"/>
</dbReference>
<dbReference type="NCBIfam" id="NF001109">
    <property type="entry name" value="PRK00136.1"/>
    <property type="match status" value="1"/>
</dbReference>
<dbReference type="PANTHER" id="PTHR11758">
    <property type="entry name" value="40S RIBOSOMAL PROTEIN S15A"/>
    <property type="match status" value="1"/>
</dbReference>
<dbReference type="Pfam" id="PF00410">
    <property type="entry name" value="Ribosomal_S8"/>
    <property type="match status" value="1"/>
</dbReference>
<dbReference type="SUPFAM" id="SSF56047">
    <property type="entry name" value="Ribosomal protein S8"/>
    <property type="match status" value="1"/>
</dbReference>
<dbReference type="PROSITE" id="PS00053">
    <property type="entry name" value="RIBOSOMAL_S8"/>
    <property type="match status" value="1"/>
</dbReference>
<comment type="function">
    <text evidence="1">One of the primary rRNA binding proteins, it binds directly to 16S rRNA central domain where it helps coordinate assembly of the platform of the 30S subunit.</text>
</comment>
<comment type="subunit">
    <text evidence="1">Part of the 30S ribosomal subunit. Contacts proteins S5 and S12.</text>
</comment>
<comment type="similarity">
    <text evidence="1">Belongs to the universal ribosomal protein uS8 family.</text>
</comment>
<organism>
    <name type="scientific">Mycobacterium leprae (strain TN)</name>
    <dbReference type="NCBI Taxonomy" id="272631"/>
    <lineage>
        <taxon>Bacteria</taxon>
        <taxon>Bacillati</taxon>
        <taxon>Actinomycetota</taxon>
        <taxon>Actinomycetes</taxon>
        <taxon>Mycobacteriales</taxon>
        <taxon>Mycobacteriaceae</taxon>
        <taxon>Mycobacterium</taxon>
    </lineage>
</organism>
<proteinExistence type="inferred from homology"/>
<evidence type="ECO:0000255" key="1">
    <source>
        <dbReference type="HAMAP-Rule" id="MF_01302"/>
    </source>
</evidence>
<evidence type="ECO:0000305" key="2"/>
<gene>
    <name evidence="1" type="primary">rpsH</name>
    <name type="ordered locus">ML1845</name>
    <name type="ORF">MLCB2492.18</name>
</gene>